<evidence type="ECO:0000255" key="1">
    <source>
        <dbReference type="HAMAP-Rule" id="MF_00952"/>
    </source>
</evidence>
<evidence type="ECO:0000255" key="2">
    <source>
        <dbReference type="PROSITE-ProRule" id="PRU01383"/>
    </source>
</evidence>
<evidence type="ECO:0000256" key="3">
    <source>
        <dbReference type="SAM" id="MobiDB-lite"/>
    </source>
</evidence>
<feature type="chain" id="PRO_0000145171" description="DNA topoisomerase 1">
    <location>
        <begin position="1"/>
        <end position="876"/>
    </location>
</feature>
<feature type="domain" description="Toprim" evidence="1">
    <location>
        <begin position="3"/>
        <end position="150"/>
    </location>
</feature>
<feature type="domain" description="Topo IA-type catalytic" evidence="2">
    <location>
        <begin position="166"/>
        <end position="582"/>
    </location>
</feature>
<feature type="zinc finger region" description="C4-type 1">
    <location>
        <begin position="668"/>
        <end position="695"/>
    </location>
</feature>
<feature type="zinc finger region" description="C4-type 2">
    <location>
        <begin position="717"/>
        <end position="742"/>
    </location>
</feature>
<feature type="region of interest" description="Disordered" evidence="3">
    <location>
        <begin position="37"/>
        <end position="69"/>
    </location>
</feature>
<feature type="region of interest" description="Interaction with DNA" evidence="1">
    <location>
        <begin position="200"/>
        <end position="205"/>
    </location>
</feature>
<feature type="compositionally biased region" description="Low complexity" evidence="3">
    <location>
        <begin position="38"/>
        <end position="58"/>
    </location>
</feature>
<feature type="compositionally biased region" description="Basic and acidic residues" evidence="3">
    <location>
        <begin position="59"/>
        <end position="69"/>
    </location>
</feature>
<feature type="active site" description="O-(5'-phospho-DNA)-tyrosine intermediate" evidence="2">
    <location>
        <position position="327"/>
    </location>
</feature>
<feature type="binding site" evidence="1">
    <location>
        <position position="9"/>
    </location>
    <ligand>
        <name>Mg(2+)</name>
        <dbReference type="ChEBI" id="CHEBI:18420"/>
        <note>catalytic</note>
    </ligand>
</feature>
<feature type="binding site" evidence="1">
    <location>
        <position position="119"/>
    </location>
    <ligand>
        <name>Mg(2+)</name>
        <dbReference type="ChEBI" id="CHEBI:18420"/>
        <note>catalytic</note>
    </ligand>
</feature>
<feature type="site" description="Interaction with DNA" evidence="1">
    <location>
        <position position="33"/>
    </location>
</feature>
<feature type="site" description="Interaction with DNA" evidence="1">
    <location>
        <position position="176"/>
    </location>
</feature>
<feature type="site" description="Interaction with DNA" evidence="1">
    <location>
        <position position="177"/>
    </location>
</feature>
<feature type="site" description="Interaction with DNA" evidence="1">
    <location>
        <position position="180"/>
    </location>
</feature>
<feature type="site" description="Interaction with DNA" evidence="1">
    <location>
        <position position="192"/>
    </location>
</feature>
<feature type="site" description="Interaction with DNA" evidence="1">
    <location>
        <position position="329"/>
    </location>
</feature>
<feature type="site" description="Interaction with DNA" evidence="1">
    <location>
        <position position="514"/>
    </location>
</feature>
<organism>
    <name type="scientific">Vibrio cholerae serotype O1 (strain ATCC 39315 / El Tor Inaba N16961)</name>
    <dbReference type="NCBI Taxonomy" id="243277"/>
    <lineage>
        <taxon>Bacteria</taxon>
        <taxon>Pseudomonadati</taxon>
        <taxon>Pseudomonadota</taxon>
        <taxon>Gammaproteobacteria</taxon>
        <taxon>Vibrionales</taxon>
        <taxon>Vibrionaceae</taxon>
        <taxon>Vibrio</taxon>
    </lineage>
</organism>
<protein>
    <recommendedName>
        <fullName evidence="1">DNA topoisomerase 1</fullName>
        <ecNumber evidence="1">5.6.2.1</ecNumber>
    </recommendedName>
    <alternativeName>
        <fullName evidence="1">DNA topoisomerase I</fullName>
    </alternativeName>
    <alternativeName>
        <fullName>Omega-protein</fullName>
    </alternativeName>
    <alternativeName>
        <fullName>Relaxing enzyme</fullName>
    </alternativeName>
    <alternativeName>
        <fullName>Swivelase</fullName>
    </alternativeName>
    <alternativeName>
        <fullName>Untwisting enzyme</fullName>
    </alternativeName>
</protein>
<gene>
    <name evidence="1" type="primary">topA</name>
    <name type="ordered locus">VC_1730</name>
</gene>
<proteinExistence type="inferred from homology"/>
<sequence>MGKSLVIVESPAKAKTINKYLGKDFIVKSSVGHVRDLPTAGQTATPTGKAAAASTKKASTTDKEQQKREKERAALIKKMGVDPYHGWQANYQILPGKEKVVAELQKLAKDADSVYLATDLDREGEAIAWHLREIIGGDEKRYKRVVFNEITKNAIQQAFKQPGELNMDGVNAQQARRFMDRVVGFMVSPLLWKKVARGLSAGRVQSVAVKLLVEREREIKAFVPEEFWDINADTLTADKQDFRLLVAQKDGLAFKPVNETEALAAVAALNKAQYEVCKREDKPTTSKPSAPFITSTLQQAASTRLGYGVKKTMMLAQRLYEAGYITYMRTDSTNLSAEAVENLRGYITKHYGEAYLPSQPNVYGSKQNAQEAHEAIRPSDVTVTADDLEGMEADAHKLYALIWNQFVACQMTPAQYDSTTVSVKAAEYTLKAKGRILKFDGWTRVQRPLGKNEDQILPPVKVGDSLKLVSLDPKQHFTKPPARYTEAALVKELEKRGIGRPSTYASIISTIQDRGYVKVDQRRFFAEKMGEIVTDRLDENFDDLMNYDFTARMEEKLDQIAEGEVNWTAVLDEFFADFSRDLETAEQDESLGGMKPNHIVMTNILCPTCSRPMGIRTASTGVFLGCSGYGLPPKERCKTTINLGDEEGVINVLEEDVETAALRAKKRCPICETAMDAYLIDDKRKLHVCGNNPNCEGFIVEEGEFKVKGYEGPTVECDKCGSDMVLKNGRFGKYMGCTNDACKNTRKILKNGEVAPPKEEPVHFPELPCENSDAYFVLRDGASGLFFAASNFPKSRETRAPLVEELKRFAERLPEKYQYLTSAPAHDPDGLPAVVRFSRKEKEHYVRTETEGKPSGWMAVYQEGKWLVTDKRKNAK</sequence>
<comment type="function">
    <text evidence="1">Releases the supercoiling and torsional tension of DNA, which is introduced during the DNA replication and transcription, by transiently cleaving and rejoining one strand of the DNA duplex. Introduces a single-strand break via transesterification at a target site in duplex DNA. The scissile phosphodiester is attacked by the catalytic tyrosine of the enzyme, resulting in the formation of a DNA-(5'-phosphotyrosyl)-enzyme intermediate and the expulsion of a 3'-OH DNA strand. The free DNA strand then undergoes passage around the unbroken strand, thus removing DNA supercoils. Finally, in the religation step, the DNA 3'-OH attacks the covalent intermediate to expel the active-site tyrosine and restore the DNA phosphodiester backbone.</text>
</comment>
<comment type="catalytic activity">
    <reaction evidence="1">
        <text>ATP-independent breakage of single-stranded DNA, followed by passage and rejoining.</text>
        <dbReference type="EC" id="5.6.2.1"/>
    </reaction>
</comment>
<comment type="cofactor">
    <cofactor evidence="1">
        <name>Mg(2+)</name>
        <dbReference type="ChEBI" id="CHEBI:18420"/>
    </cofactor>
</comment>
<comment type="subunit">
    <text evidence="1">Monomer.</text>
</comment>
<comment type="similarity">
    <text evidence="1">Belongs to the type IA topoisomerase family.</text>
</comment>
<reference key="1">
    <citation type="journal article" date="2000" name="Nature">
        <title>DNA sequence of both chromosomes of the cholera pathogen Vibrio cholerae.</title>
        <authorList>
            <person name="Heidelberg J.F."/>
            <person name="Eisen J.A."/>
            <person name="Nelson W.C."/>
            <person name="Clayton R.A."/>
            <person name="Gwinn M.L."/>
            <person name="Dodson R.J."/>
            <person name="Haft D.H."/>
            <person name="Hickey E.K."/>
            <person name="Peterson J.D."/>
            <person name="Umayam L.A."/>
            <person name="Gill S.R."/>
            <person name="Nelson K.E."/>
            <person name="Read T.D."/>
            <person name="Tettelin H."/>
            <person name="Richardson D.L."/>
            <person name="Ermolaeva M.D."/>
            <person name="Vamathevan J.J."/>
            <person name="Bass S."/>
            <person name="Qin H."/>
            <person name="Dragoi I."/>
            <person name="Sellers P."/>
            <person name="McDonald L.A."/>
            <person name="Utterback T.R."/>
            <person name="Fleischmann R.D."/>
            <person name="Nierman W.C."/>
            <person name="White O."/>
            <person name="Salzberg S.L."/>
            <person name="Smith H.O."/>
            <person name="Colwell R.R."/>
            <person name="Mekalanos J.J."/>
            <person name="Venter J.C."/>
            <person name="Fraser C.M."/>
        </authorList>
    </citation>
    <scope>NUCLEOTIDE SEQUENCE [LARGE SCALE GENOMIC DNA]</scope>
    <source>
        <strain>ATCC 39315 / El Tor Inaba N16961</strain>
    </source>
</reference>
<accession>Q9KRB2</accession>
<name>TOP1_VIBCH</name>
<keyword id="KW-0238">DNA-binding</keyword>
<keyword id="KW-0413">Isomerase</keyword>
<keyword id="KW-0460">Magnesium</keyword>
<keyword id="KW-0479">Metal-binding</keyword>
<keyword id="KW-1185">Reference proteome</keyword>
<keyword id="KW-0677">Repeat</keyword>
<keyword id="KW-0799">Topoisomerase</keyword>
<keyword id="KW-0862">Zinc</keyword>
<keyword id="KW-0863">Zinc-finger</keyword>
<dbReference type="EC" id="5.6.2.1" evidence="1"/>
<dbReference type="EMBL" id="AE003852">
    <property type="protein sequence ID" value="AAF94880.1"/>
    <property type="molecule type" value="Genomic_DNA"/>
</dbReference>
<dbReference type="PIR" id="B82163">
    <property type="entry name" value="B82163"/>
</dbReference>
<dbReference type="RefSeq" id="NP_231366.1">
    <property type="nucleotide sequence ID" value="NC_002505.1"/>
</dbReference>
<dbReference type="RefSeq" id="WP_000520431.1">
    <property type="nucleotide sequence ID" value="NZ_LT906614.1"/>
</dbReference>
<dbReference type="SMR" id="Q9KRB2"/>
<dbReference type="STRING" id="243277.VC_1730"/>
<dbReference type="DNASU" id="2613735"/>
<dbReference type="EnsemblBacteria" id="AAF94880">
    <property type="protein sequence ID" value="AAF94880"/>
    <property type="gene ID" value="VC_1730"/>
</dbReference>
<dbReference type="KEGG" id="vch:VC_1730"/>
<dbReference type="PATRIC" id="fig|243277.26.peg.1655"/>
<dbReference type="eggNOG" id="COG0550">
    <property type="taxonomic scope" value="Bacteria"/>
</dbReference>
<dbReference type="HOGENOM" id="CLU_002929_4_3_6"/>
<dbReference type="Proteomes" id="UP000000584">
    <property type="component" value="Chromosome 1"/>
</dbReference>
<dbReference type="GO" id="GO:0005694">
    <property type="term" value="C:chromosome"/>
    <property type="evidence" value="ECO:0007669"/>
    <property type="project" value="InterPro"/>
</dbReference>
<dbReference type="GO" id="GO:0003677">
    <property type="term" value="F:DNA binding"/>
    <property type="evidence" value="ECO:0007669"/>
    <property type="project" value="UniProtKB-KW"/>
</dbReference>
<dbReference type="GO" id="GO:0003917">
    <property type="term" value="F:DNA topoisomerase type I (single strand cut, ATP-independent) activity"/>
    <property type="evidence" value="ECO:0007669"/>
    <property type="project" value="UniProtKB-UniRule"/>
</dbReference>
<dbReference type="GO" id="GO:0008270">
    <property type="term" value="F:zinc ion binding"/>
    <property type="evidence" value="ECO:0007669"/>
    <property type="project" value="UniProtKB-KW"/>
</dbReference>
<dbReference type="GO" id="GO:0006265">
    <property type="term" value="P:DNA topological change"/>
    <property type="evidence" value="ECO:0007669"/>
    <property type="project" value="UniProtKB-UniRule"/>
</dbReference>
<dbReference type="CDD" id="cd00186">
    <property type="entry name" value="TOP1Ac"/>
    <property type="match status" value="1"/>
</dbReference>
<dbReference type="CDD" id="cd03363">
    <property type="entry name" value="TOPRIM_TopoIA_TopoI"/>
    <property type="match status" value="1"/>
</dbReference>
<dbReference type="FunFam" id="1.10.290.10:FF:000002">
    <property type="entry name" value="DNA topoisomerase 1"/>
    <property type="match status" value="1"/>
</dbReference>
<dbReference type="FunFam" id="3.30.65.10:FF:000002">
    <property type="entry name" value="DNA topoisomerase 1"/>
    <property type="match status" value="1"/>
</dbReference>
<dbReference type="FunFam" id="3.40.50.140:FF:000001">
    <property type="entry name" value="DNA topoisomerase 1"/>
    <property type="match status" value="1"/>
</dbReference>
<dbReference type="Gene3D" id="2.20.25.10">
    <property type="match status" value="1"/>
</dbReference>
<dbReference type="Gene3D" id="3.40.50.140">
    <property type="match status" value="1"/>
</dbReference>
<dbReference type="Gene3D" id="3.30.65.10">
    <property type="entry name" value="Bacterial Topoisomerase I, domain 1"/>
    <property type="match status" value="3"/>
</dbReference>
<dbReference type="Gene3D" id="1.10.460.10">
    <property type="entry name" value="Topoisomerase I, domain 2"/>
    <property type="match status" value="1"/>
</dbReference>
<dbReference type="Gene3D" id="2.70.20.10">
    <property type="entry name" value="Topoisomerase I, domain 3"/>
    <property type="match status" value="1"/>
</dbReference>
<dbReference type="Gene3D" id="1.10.290.10">
    <property type="entry name" value="Topoisomerase I, domain 4"/>
    <property type="match status" value="1"/>
</dbReference>
<dbReference type="HAMAP" id="MF_00952">
    <property type="entry name" value="Topoisom_1_prok"/>
    <property type="match status" value="1"/>
</dbReference>
<dbReference type="InterPro" id="IPR049330">
    <property type="entry name" value="TOP1_Znf"/>
</dbReference>
<dbReference type="InterPro" id="IPR000380">
    <property type="entry name" value="Topo_IA"/>
</dbReference>
<dbReference type="InterPro" id="IPR003601">
    <property type="entry name" value="Topo_IA_2"/>
</dbReference>
<dbReference type="InterPro" id="IPR023406">
    <property type="entry name" value="Topo_IA_AS"/>
</dbReference>
<dbReference type="InterPro" id="IPR013497">
    <property type="entry name" value="Topo_IA_cen"/>
</dbReference>
<dbReference type="InterPro" id="IPR013824">
    <property type="entry name" value="Topo_IA_cen_sub1"/>
</dbReference>
<dbReference type="InterPro" id="IPR013825">
    <property type="entry name" value="Topo_IA_cen_sub2"/>
</dbReference>
<dbReference type="InterPro" id="IPR013826">
    <property type="entry name" value="Topo_IA_cen_sub3"/>
</dbReference>
<dbReference type="InterPro" id="IPR023405">
    <property type="entry name" value="Topo_IA_core_domain"/>
</dbReference>
<dbReference type="InterPro" id="IPR003602">
    <property type="entry name" value="Topo_IA_DNA-bd_dom"/>
</dbReference>
<dbReference type="InterPro" id="IPR013498">
    <property type="entry name" value="Topo_IA_Znf"/>
</dbReference>
<dbReference type="InterPro" id="IPR005733">
    <property type="entry name" value="TopoI_bac-type"/>
</dbReference>
<dbReference type="InterPro" id="IPR013263">
    <property type="entry name" value="TopoI_Znr_bac"/>
</dbReference>
<dbReference type="InterPro" id="IPR028612">
    <property type="entry name" value="Topoisom_1_IA"/>
</dbReference>
<dbReference type="InterPro" id="IPR006171">
    <property type="entry name" value="TOPRIM_dom"/>
</dbReference>
<dbReference type="InterPro" id="IPR034149">
    <property type="entry name" value="TOPRIM_TopoI"/>
</dbReference>
<dbReference type="NCBIfam" id="TIGR01051">
    <property type="entry name" value="topA_bact"/>
    <property type="match status" value="1"/>
</dbReference>
<dbReference type="PANTHER" id="PTHR42785:SF1">
    <property type="entry name" value="DNA TOPOISOMERASE"/>
    <property type="match status" value="1"/>
</dbReference>
<dbReference type="PANTHER" id="PTHR42785">
    <property type="entry name" value="DNA TOPOISOMERASE, TYPE IA, CORE"/>
    <property type="match status" value="1"/>
</dbReference>
<dbReference type="Pfam" id="PF01131">
    <property type="entry name" value="Topoisom_bac"/>
    <property type="match status" value="1"/>
</dbReference>
<dbReference type="Pfam" id="PF01751">
    <property type="entry name" value="Toprim"/>
    <property type="match status" value="1"/>
</dbReference>
<dbReference type="Pfam" id="PF21372">
    <property type="entry name" value="Zn_ribbon_bTOP1"/>
    <property type="match status" value="1"/>
</dbReference>
<dbReference type="Pfam" id="PF01396">
    <property type="entry name" value="Zn_ribbon_Top1"/>
    <property type="match status" value="2"/>
</dbReference>
<dbReference type="Pfam" id="PF08272">
    <property type="entry name" value="Zn_Ribbon_Topo"/>
    <property type="match status" value="2"/>
</dbReference>
<dbReference type="PRINTS" id="PR00417">
    <property type="entry name" value="PRTPISMRASEI"/>
</dbReference>
<dbReference type="SMART" id="SM00437">
    <property type="entry name" value="TOP1Ac"/>
    <property type="match status" value="1"/>
</dbReference>
<dbReference type="SMART" id="SM00436">
    <property type="entry name" value="TOP1Bc"/>
    <property type="match status" value="1"/>
</dbReference>
<dbReference type="SMART" id="SM00493">
    <property type="entry name" value="TOPRIM"/>
    <property type="match status" value="1"/>
</dbReference>
<dbReference type="SUPFAM" id="SSF56712">
    <property type="entry name" value="Prokaryotic type I DNA topoisomerase"/>
    <property type="match status" value="1"/>
</dbReference>
<dbReference type="SUPFAM" id="SSF57783">
    <property type="entry name" value="Zinc beta-ribbon"/>
    <property type="match status" value="3"/>
</dbReference>
<dbReference type="PROSITE" id="PS00396">
    <property type="entry name" value="TOPO_IA_1"/>
    <property type="match status" value="1"/>
</dbReference>
<dbReference type="PROSITE" id="PS52039">
    <property type="entry name" value="TOPO_IA_2"/>
    <property type="match status" value="1"/>
</dbReference>
<dbReference type="PROSITE" id="PS50880">
    <property type="entry name" value="TOPRIM"/>
    <property type="match status" value="1"/>
</dbReference>